<protein>
    <recommendedName>
        <fullName evidence="1">Methylated-DNA--protein-cysteine methyltransferase</fullName>
        <ecNumber evidence="1">2.1.1.63</ecNumber>
    </recommendedName>
    <alternativeName>
        <fullName evidence="1">6-O-methylguanine-DNA methyltransferase</fullName>
        <shortName evidence="1">MGMT</shortName>
    </alternativeName>
    <alternativeName>
        <fullName evidence="1">O-6-methylguanine-DNA-alkyltransferase</fullName>
    </alternativeName>
</protein>
<sequence length="151" mass="17065">MLVYGLYKSPLGYITVAKDDKGFIMLDFCDCVEGNSRDDSSFTEFFHKLDLYFEGKPINLREPINLKTYPFRLSVFKEVMRIPWGKVMTYKQIADSLGTSPRAVGMALSKNPILLIIPCHRVIAENGIGGYSRGVKLKRALLELEGVKIPE</sequence>
<feature type="chain" id="PRO_1000212901" description="Methylated-DNA--protein-cysteine methyltransferase">
    <location>
        <begin position="1"/>
        <end position="151"/>
    </location>
</feature>
<feature type="active site" description="Nucleophile; methyl group acceptor" evidence="1">
    <location>
        <position position="119"/>
    </location>
</feature>
<comment type="function">
    <text evidence="1">Involved in the cellular defense against the biological effects of O6-methylguanine (O6-MeG) and O4-methylthymine (O4-MeT) in DNA. Repairs the methylated nucleobase in DNA by stoichiometrically transferring the methyl group to a cysteine residue in the enzyme. This is a suicide reaction: the enzyme is irreversibly inactivated.</text>
</comment>
<comment type="catalytic activity">
    <reaction evidence="1">
        <text>a 6-O-methyl-2'-deoxyguanosine in DNA + L-cysteinyl-[protein] = S-methyl-L-cysteinyl-[protein] + a 2'-deoxyguanosine in DNA</text>
        <dbReference type="Rhea" id="RHEA:24000"/>
        <dbReference type="Rhea" id="RHEA-COMP:10131"/>
        <dbReference type="Rhea" id="RHEA-COMP:10132"/>
        <dbReference type="Rhea" id="RHEA-COMP:11367"/>
        <dbReference type="Rhea" id="RHEA-COMP:11368"/>
        <dbReference type="ChEBI" id="CHEBI:29950"/>
        <dbReference type="ChEBI" id="CHEBI:82612"/>
        <dbReference type="ChEBI" id="CHEBI:85445"/>
        <dbReference type="ChEBI" id="CHEBI:85448"/>
        <dbReference type="EC" id="2.1.1.63"/>
    </reaction>
</comment>
<comment type="catalytic activity">
    <reaction evidence="1">
        <text>a 4-O-methyl-thymidine in DNA + L-cysteinyl-[protein] = a thymidine in DNA + S-methyl-L-cysteinyl-[protein]</text>
        <dbReference type="Rhea" id="RHEA:53428"/>
        <dbReference type="Rhea" id="RHEA-COMP:10131"/>
        <dbReference type="Rhea" id="RHEA-COMP:10132"/>
        <dbReference type="Rhea" id="RHEA-COMP:13555"/>
        <dbReference type="Rhea" id="RHEA-COMP:13556"/>
        <dbReference type="ChEBI" id="CHEBI:29950"/>
        <dbReference type="ChEBI" id="CHEBI:82612"/>
        <dbReference type="ChEBI" id="CHEBI:137386"/>
        <dbReference type="ChEBI" id="CHEBI:137387"/>
        <dbReference type="EC" id="2.1.1.63"/>
    </reaction>
</comment>
<comment type="subcellular location">
    <subcellularLocation>
        <location evidence="1">Cytoplasm</location>
    </subcellularLocation>
</comment>
<comment type="miscellaneous">
    <text>This enzyme catalyzes only one turnover and therefore is not strictly catalytic. According to one definition, an enzyme is a biocatalyst that acts repeatedly and over many reaction cycles.</text>
</comment>
<comment type="similarity">
    <text evidence="1">Belongs to the MGMT family.</text>
</comment>
<organism>
    <name type="scientific">Saccharolobus islandicus (strain M.16.27)</name>
    <name type="common">Sulfolobus islandicus</name>
    <dbReference type="NCBI Taxonomy" id="427318"/>
    <lineage>
        <taxon>Archaea</taxon>
        <taxon>Thermoproteota</taxon>
        <taxon>Thermoprotei</taxon>
        <taxon>Sulfolobales</taxon>
        <taxon>Sulfolobaceae</taxon>
        <taxon>Saccharolobus</taxon>
    </lineage>
</organism>
<dbReference type="EC" id="2.1.1.63" evidence="1"/>
<dbReference type="EMBL" id="CP001401">
    <property type="protein sequence ID" value="ACP54299.1"/>
    <property type="molecule type" value="Genomic_DNA"/>
</dbReference>
<dbReference type="RefSeq" id="WP_012718360.1">
    <property type="nucleotide sequence ID" value="NC_012632.1"/>
</dbReference>
<dbReference type="SMR" id="C3N1B4"/>
<dbReference type="KEGG" id="sim:M1627_0271"/>
<dbReference type="HOGENOM" id="CLU_000445_52_2_2"/>
<dbReference type="Proteomes" id="UP000002307">
    <property type="component" value="Chromosome"/>
</dbReference>
<dbReference type="GO" id="GO:0005737">
    <property type="term" value="C:cytoplasm"/>
    <property type="evidence" value="ECO:0007669"/>
    <property type="project" value="UniProtKB-SubCell"/>
</dbReference>
<dbReference type="GO" id="GO:0003908">
    <property type="term" value="F:methylated-DNA-[protein]-cysteine S-methyltransferase activity"/>
    <property type="evidence" value="ECO:0007669"/>
    <property type="project" value="UniProtKB-UniRule"/>
</dbReference>
<dbReference type="GO" id="GO:0006307">
    <property type="term" value="P:DNA alkylation repair"/>
    <property type="evidence" value="ECO:0007669"/>
    <property type="project" value="UniProtKB-UniRule"/>
</dbReference>
<dbReference type="GO" id="GO:0032259">
    <property type="term" value="P:methylation"/>
    <property type="evidence" value="ECO:0007669"/>
    <property type="project" value="UniProtKB-KW"/>
</dbReference>
<dbReference type="CDD" id="cd06445">
    <property type="entry name" value="ATase"/>
    <property type="match status" value="1"/>
</dbReference>
<dbReference type="FunFam" id="1.10.10.10:FF:000214">
    <property type="entry name" value="Methylated-DNA--protein-cysteine methyltransferase"/>
    <property type="match status" value="1"/>
</dbReference>
<dbReference type="Gene3D" id="3.30.160.70">
    <property type="entry name" value="Methylated DNA-protein cysteine methyltransferase domain"/>
    <property type="match status" value="1"/>
</dbReference>
<dbReference type="Gene3D" id="1.10.10.10">
    <property type="entry name" value="Winged helix-like DNA-binding domain superfamily/Winged helix DNA-binding domain"/>
    <property type="match status" value="1"/>
</dbReference>
<dbReference type="HAMAP" id="MF_00772">
    <property type="entry name" value="OGT"/>
    <property type="match status" value="1"/>
</dbReference>
<dbReference type="InterPro" id="IPR001497">
    <property type="entry name" value="MethylDNA_cys_MeTrfase_AS"/>
</dbReference>
<dbReference type="InterPro" id="IPR014048">
    <property type="entry name" value="MethylDNA_cys_MeTrfase_DNA-bd"/>
</dbReference>
<dbReference type="InterPro" id="IPR036217">
    <property type="entry name" value="MethylDNA_cys_MeTrfase_DNAb"/>
</dbReference>
<dbReference type="InterPro" id="IPR008332">
    <property type="entry name" value="MethylG_MeTrfase_N"/>
</dbReference>
<dbReference type="InterPro" id="IPR023546">
    <property type="entry name" value="MGMT"/>
</dbReference>
<dbReference type="InterPro" id="IPR036631">
    <property type="entry name" value="MGMT_N_sf"/>
</dbReference>
<dbReference type="InterPro" id="IPR036388">
    <property type="entry name" value="WH-like_DNA-bd_sf"/>
</dbReference>
<dbReference type="NCBIfam" id="TIGR00589">
    <property type="entry name" value="ogt"/>
    <property type="match status" value="1"/>
</dbReference>
<dbReference type="PANTHER" id="PTHR10815">
    <property type="entry name" value="METHYLATED-DNA--PROTEIN-CYSTEINE METHYLTRANSFERASE"/>
    <property type="match status" value="1"/>
</dbReference>
<dbReference type="PANTHER" id="PTHR10815:SF13">
    <property type="entry name" value="METHYLATED-DNA--PROTEIN-CYSTEINE METHYLTRANSFERASE"/>
    <property type="match status" value="1"/>
</dbReference>
<dbReference type="Pfam" id="PF01035">
    <property type="entry name" value="DNA_binding_1"/>
    <property type="match status" value="1"/>
</dbReference>
<dbReference type="Pfam" id="PF02870">
    <property type="entry name" value="Methyltransf_1N"/>
    <property type="match status" value="1"/>
</dbReference>
<dbReference type="SUPFAM" id="SSF53155">
    <property type="entry name" value="Methylated DNA-protein cysteine methyltransferase domain"/>
    <property type="match status" value="1"/>
</dbReference>
<dbReference type="SUPFAM" id="SSF46767">
    <property type="entry name" value="Methylated DNA-protein cysteine methyltransferase, C-terminal domain"/>
    <property type="match status" value="1"/>
</dbReference>
<dbReference type="PROSITE" id="PS00374">
    <property type="entry name" value="MGMT"/>
    <property type="match status" value="1"/>
</dbReference>
<name>OGT_SACI3</name>
<gene>
    <name evidence="1" type="primary">ogt</name>
    <name type="ordered locus">M1627_0271</name>
</gene>
<evidence type="ECO:0000255" key="1">
    <source>
        <dbReference type="HAMAP-Rule" id="MF_00772"/>
    </source>
</evidence>
<reference key="1">
    <citation type="journal article" date="2009" name="Proc. Natl. Acad. Sci. U.S.A.">
        <title>Biogeography of the Sulfolobus islandicus pan-genome.</title>
        <authorList>
            <person name="Reno M.L."/>
            <person name="Held N.L."/>
            <person name="Fields C.J."/>
            <person name="Burke P.V."/>
            <person name="Whitaker R.J."/>
        </authorList>
    </citation>
    <scope>NUCLEOTIDE SEQUENCE [LARGE SCALE GENOMIC DNA]</scope>
    <source>
        <strain>M.16.27</strain>
    </source>
</reference>
<accession>C3N1B4</accession>
<keyword id="KW-0963">Cytoplasm</keyword>
<keyword id="KW-0227">DNA damage</keyword>
<keyword id="KW-0234">DNA repair</keyword>
<keyword id="KW-0489">Methyltransferase</keyword>
<keyword id="KW-0808">Transferase</keyword>
<proteinExistence type="inferred from homology"/>